<comment type="alternative products">
    <event type="alternative splicing"/>
    <isoform>
        <id>Q8CI33-1</id>
        <name>1</name>
        <sequence type="displayed"/>
    </isoform>
    <isoform>
        <id>Q8CI33-2</id>
        <name>2</name>
        <sequence type="described" ref="VSP_030589"/>
    </isoform>
</comment>
<comment type="similarity">
    <text evidence="3">Belongs to the CWF19 family.</text>
</comment>
<comment type="sequence caution" evidence="3">
    <conflict type="miscellaneous discrepancy">
        <sequence resource="EMBL-CDS" id="AAH27553"/>
    </conflict>
    <text>Contaminating sequence. Potential poly-A sequence.</text>
</comment>
<keyword id="KW-0025">Alternative splicing</keyword>
<keyword id="KW-1185">Reference proteome</keyword>
<evidence type="ECO:0000256" key="1">
    <source>
        <dbReference type="SAM" id="MobiDB-lite"/>
    </source>
</evidence>
<evidence type="ECO:0000303" key="2">
    <source>
    </source>
</evidence>
<evidence type="ECO:0000305" key="3"/>
<gene>
    <name type="primary">Cwf19l1</name>
</gene>
<sequence>MAQKPLRLLACGDVEGKFDVLFNRVRTIQKKSGNFDLLLCVGNFFGSAQDAEWEEYKTGNKKAPIQTYVLGANNEETANYFQGADGCELAENITYLGRKGVFTGSSGLQIVYLSGTESLDEPVPAHSFSPKDVSSLRTMLCSASQFKGVDILLTSPWPKYVGSFGNSSGEVDTKNCGSALISSLAVSLKPRYHFAALEKSYYERLPYRNHVVLQESAQHATRFIALANVGNPEKKKYLYAFSIVPMKLMAVAELVKQPPDVTENPYRDSGKQAAGGKHIPAPQEESACQFFFDLSEKQGRKRPSTGRDTRPPHAKQPRKPPQPPGPCWFCLASPEVEKHLVVNIGTHCYLALAKGGLSDDHVLILPIGHYQSVVELSAEVVEEVEKYKATLQRFFKSRGKRCVLFERNYRSHHLQLQVIPVPLSCCATDDIKDAFITQAQEQQIELLEIPEHSDIKQIAQPGAAYFYVELDTGEKLFHRIKKNFPLQFGREVLASEAILNIPEKADWRQCQTSKDEEEALARRFRKDFEPFDFTLDD</sequence>
<protein>
    <recommendedName>
        <fullName>CWF19-like protein 1</fullName>
    </recommendedName>
</protein>
<name>C19L1_MOUSE</name>
<organism>
    <name type="scientific">Mus musculus</name>
    <name type="common">Mouse</name>
    <dbReference type="NCBI Taxonomy" id="10090"/>
    <lineage>
        <taxon>Eukaryota</taxon>
        <taxon>Metazoa</taxon>
        <taxon>Chordata</taxon>
        <taxon>Craniata</taxon>
        <taxon>Vertebrata</taxon>
        <taxon>Euteleostomi</taxon>
        <taxon>Mammalia</taxon>
        <taxon>Eutheria</taxon>
        <taxon>Euarchontoglires</taxon>
        <taxon>Glires</taxon>
        <taxon>Rodentia</taxon>
        <taxon>Myomorpha</taxon>
        <taxon>Muroidea</taxon>
        <taxon>Muridae</taxon>
        <taxon>Murinae</taxon>
        <taxon>Mus</taxon>
        <taxon>Mus</taxon>
    </lineage>
</organism>
<proteinExistence type="evidence at protein level"/>
<reference key="1">
    <citation type="journal article" date="2005" name="Science">
        <title>The transcriptional landscape of the mammalian genome.</title>
        <authorList>
            <person name="Carninci P."/>
            <person name="Kasukawa T."/>
            <person name="Katayama S."/>
            <person name="Gough J."/>
            <person name="Frith M.C."/>
            <person name="Maeda N."/>
            <person name="Oyama R."/>
            <person name="Ravasi T."/>
            <person name="Lenhard B."/>
            <person name="Wells C."/>
            <person name="Kodzius R."/>
            <person name="Shimokawa K."/>
            <person name="Bajic V.B."/>
            <person name="Brenner S.E."/>
            <person name="Batalov S."/>
            <person name="Forrest A.R."/>
            <person name="Zavolan M."/>
            <person name="Davis M.J."/>
            <person name="Wilming L.G."/>
            <person name="Aidinis V."/>
            <person name="Allen J.E."/>
            <person name="Ambesi-Impiombato A."/>
            <person name="Apweiler R."/>
            <person name="Aturaliya R.N."/>
            <person name="Bailey T.L."/>
            <person name="Bansal M."/>
            <person name="Baxter L."/>
            <person name="Beisel K.W."/>
            <person name="Bersano T."/>
            <person name="Bono H."/>
            <person name="Chalk A.M."/>
            <person name="Chiu K.P."/>
            <person name="Choudhary V."/>
            <person name="Christoffels A."/>
            <person name="Clutterbuck D.R."/>
            <person name="Crowe M.L."/>
            <person name="Dalla E."/>
            <person name="Dalrymple B.P."/>
            <person name="de Bono B."/>
            <person name="Della Gatta G."/>
            <person name="di Bernardo D."/>
            <person name="Down T."/>
            <person name="Engstrom P."/>
            <person name="Fagiolini M."/>
            <person name="Faulkner G."/>
            <person name="Fletcher C.F."/>
            <person name="Fukushima T."/>
            <person name="Furuno M."/>
            <person name="Futaki S."/>
            <person name="Gariboldi M."/>
            <person name="Georgii-Hemming P."/>
            <person name="Gingeras T.R."/>
            <person name="Gojobori T."/>
            <person name="Green R.E."/>
            <person name="Gustincich S."/>
            <person name="Harbers M."/>
            <person name="Hayashi Y."/>
            <person name="Hensch T.K."/>
            <person name="Hirokawa N."/>
            <person name="Hill D."/>
            <person name="Huminiecki L."/>
            <person name="Iacono M."/>
            <person name="Ikeo K."/>
            <person name="Iwama A."/>
            <person name="Ishikawa T."/>
            <person name="Jakt M."/>
            <person name="Kanapin A."/>
            <person name="Katoh M."/>
            <person name="Kawasawa Y."/>
            <person name="Kelso J."/>
            <person name="Kitamura H."/>
            <person name="Kitano H."/>
            <person name="Kollias G."/>
            <person name="Krishnan S.P."/>
            <person name="Kruger A."/>
            <person name="Kummerfeld S.K."/>
            <person name="Kurochkin I.V."/>
            <person name="Lareau L.F."/>
            <person name="Lazarevic D."/>
            <person name="Lipovich L."/>
            <person name="Liu J."/>
            <person name="Liuni S."/>
            <person name="McWilliam S."/>
            <person name="Madan Babu M."/>
            <person name="Madera M."/>
            <person name="Marchionni L."/>
            <person name="Matsuda H."/>
            <person name="Matsuzawa S."/>
            <person name="Miki H."/>
            <person name="Mignone F."/>
            <person name="Miyake S."/>
            <person name="Morris K."/>
            <person name="Mottagui-Tabar S."/>
            <person name="Mulder N."/>
            <person name="Nakano N."/>
            <person name="Nakauchi H."/>
            <person name="Ng P."/>
            <person name="Nilsson R."/>
            <person name="Nishiguchi S."/>
            <person name="Nishikawa S."/>
            <person name="Nori F."/>
            <person name="Ohara O."/>
            <person name="Okazaki Y."/>
            <person name="Orlando V."/>
            <person name="Pang K.C."/>
            <person name="Pavan W.J."/>
            <person name="Pavesi G."/>
            <person name="Pesole G."/>
            <person name="Petrovsky N."/>
            <person name="Piazza S."/>
            <person name="Reed J."/>
            <person name="Reid J.F."/>
            <person name="Ring B.Z."/>
            <person name="Ringwald M."/>
            <person name="Rost B."/>
            <person name="Ruan Y."/>
            <person name="Salzberg S.L."/>
            <person name="Sandelin A."/>
            <person name="Schneider C."/>
            <person name="Schoenbach C."/>
            <person name="Sekiguchi K."/>
            <person name="Semple C.A."/>
            <person name="Seno S."/>
            <person name="Sessa L."/>
            <person name="Sheng Y."/>
            <person name="Shibata Y."/>
            <person name="Shimada H."/>
            <person name="Shimada K."/>
            <person name="Silva D."/>
            <person name="Sinclair B."/>
            <person name="Sperling S."/>
            <person name="Stupka E."/>
            <person name="Sugiura K."/>
            <person name="Sultana R."/>
            <person name="Takenaka Y."/>
            <person name="Taki K."/>
            <person name="Tammoja K."/>
            <person name="Tan S.L."/>
            <person name="Tang S."/>
            <person name="Taylor M.S."/>
            <person name="Tegner J."/>
            <person name="Teichmann S.A."/>
            <person name="Ueda H.R."/>
            <person name="van Nimwegen E."/>
            <person name="Verardo R."/>
            <person name="Wei C.L."/>
            <person name="Yagi K."/>
            <person name="Yamanishi H."/>
            <person name="Zabarovsky E."/>
            <person name="Zhu S."/>
            <person name="Zimmer A."/>
            <person name="Hide W."/>
            <person name="Bult C."/>
            <person name="Grimmond S.M."/>
            <person name="Teasdale R.D."/>
            <person name="Liu E.T."/>
            <person name="Brusic V."/>
            <person name="Quackenbush J."/>
            <person name="Wahlestedt C."/>
            <person name="Mattick J.S."/>
            <person name="Hume D.A."/>
            <person name="Kai C."/>
            <person name="Sasaki D."/>
            <person name="Tomaru Y."/>
            <person name="Fukuda S."/>
            <person name="Kanamori-Katayama M."/>
            <person name="Suzuki M."/>
            <person name="Aoki J."/>
            <person name="Arakawa T."/>
            <person name="Iida J."/>
            <person name="Imamura K."/>
            <person name="Itoh M."/>
            <person name="Kato T."/>
            <person name="Kawaji H."/>
            <person name="Kawagashira N."/>
            <person name="Kawashima T."/>
            <person name="Kojima M."/>
            <person name="Kondo S."/>
            <person name="Konno H."/>
            <person name="Nakano K."/>
            <person name="Ninomiya N."/>
            <person name="Nishio T."/>
            <person name="Okada M."/>
            <person name="Plessy C."/>
            <person name="Shibata K."/>
            <person name="Shiraki T."/>
            <person name="Suzuki S."/>
            <person name="Tagami M."/>
            <person name="Waki K."/>
            <person name="Watahiki A."/>
            <person name="Okamura-Oho Y."/>
            <person name="Suzuki H."/>
            <person name="Kawai J."/>
            <person name="Hayashizaki Y."/>
        </authorList>
    </citation>
    <scope>NUCLEOTIDE SEQUENCE [LARGE SCALE MRNA] (ISOFORMS 1 AND 2)</scope>
    <source>
        <strain>C57BL/6J</strain>
        <strain>NOD</strain>
        <tissue>Egg</tissue>
        <tissue>Thymus</tissue>
    </source>
</reference>
<reference key="2">
    <citation type="journal article" date="2009" name="PLoS Biol.">
        <title>Lineage-specific biology revealed by a finished genome assembly of the mouse.</title>
        <authorList>
            <person name="Church D.M."/>
            <person name="Goodstadt L."/>
            <person name="Hillier L.W."/>
            <person name="Zody M.C."/>
            <person name="Goldstein S."/>
            <person name="She X."/>
            <person name="Bult C.J."/>
            <person name="Agarwala R."/>
            <person name="Cherry J.L."/>
            <person name="DiCuccio M."/>
            <person name="Hlavina W."/>
            <person name="Kapustin Y."/>
            <person name="Meric P."/>
            <person name="Maglott D."/>
            <person name="Birtle Z."/>
            <person name="Marques A.C."/>
            <person name="Graves T."/>
            <person name="Zhou S."/>
            <person name="Teague B."/>
            <person name="Potamousis K."/>
            <person name="Churas C."/>
            <person name="Place M."/>
            <person name="Herschleb J."/>
            <person name="Runnheim R."/>
            <person name="Forrest D."/>
            <person name="Amos-Landgraf J."/>
            <person name="Schwartz D.C."/>
            <person name="Cheng Z."/>
            <person name="Lindblad-Toh K."/>
            <person name="Eichler E.E."/>
            <person name="Ponting C.P."/>
        </authorList>
    </citation>
    <scope>NUCLEOTIDE SEQUENCE [LARGE SCALE GENOMIC DNA]</scope>
    <source>
        <strain>C57BL/6J</strain>
    </source>
</reference>
<reference key="3">
    <citation type="journal article" date="2004" name="Genome Res.">
        <title>The status, quality, and expansion of the NIH full-length cDNA project: the Mammalian Gene Collection (MGC).</title>
        <authorList>
            <consortium name="The MGC Project Team"/>
        </authorList>
    </citation>
    <scope>NUCLEOTIDE SEQUENCE [LARGE SCALE MRNA] (ISOFORM 1)</scope>
    <source>
        <strain>C57BL/6J</strain>
        <strain>FVB/N</strain>
        <tissue>Liver</tissue>
        <tissue>Thymus</tissue>
    </source>
</reference>
<reference key="4">
    <citation type="journal article" date="2010" name="Cell">
        <title>A tissue-specific atlas of mouse protein phosphorylation and expression.</title>
        <authorList>
            <person name="Huttlin E.L."/>
            <person name="Jedrychowski M.P."/>
            <person name="Elias J.E."/>
            <person name="Goswami T."/>
            <person name="Rad R."/>
            <person name="Beausoleil S.A."/>
            <person name="Villen J."/>
            <person name="Haas W."/>
            <person name="Sowa M.E."/>
            <person name="Gygi S.P."/>
        </authorList>
    </citation>
    <scope>IDENTIFICATION BY MASS SPECTROMETRY [LARGE SCALE ANALYSIS]</scope>
    <source>
        <tissue>Kidney</tissue>
        <tissue>Liver</tissue>
        <tissue>Lung</tissue>
        <tissue>Spleen</tissue>
        <tissue>Testis</tissue>
    </source>
</reference>
<feature type="chain" id="PRO_0000315642" description="CWF19-like protein 1">
    <location>
        <begin position="1"/>
        <end position="537"/>
    </location>
</feature>
<feature type="region of interest" description="Disordered" evidence="1">
    <location>
        <begin position="297"/>
        <end position="323"/>
    </location>
</feature>
<feature type="splice variant" id="VSP_030589" description="In isoform 2." evidence="2">
    <location>
        <begin position="1"/>
        <end position="138"/>
    </location>
</feature>
<feature type="sequence conflict" description="In Ref. 3; AAH37640." evidence="3" ref="3">
    <original>G</original>
    <variation>D</variation>
    <location>
        <position position="83"/>
    </location>
</feature>
<feature type="sequence conflict" description="In Ref. 1; BAE24095." evidence="3" ref="1">
    <original>I</original>
    <variation>S</variation>
    <location>
        <position position="480"/>
    </location>
</feature>
<accession>Q8CI33</accession>
<accession>E9QNL3</accession>
<accession>Q05CB7</accession>
<accession>Q3UT85</accession>
<accession>Q8C2J2</accession>
<dbReference type="EMBL" id="AK088543">
    <property type="protein sequence ID" value="BAC40413.1"/>
    <property type="molecule type" value="mRNA"/>
</dbReference>
<dbReference type="EMBL" id="AK139654">
    <property type="protein sequence ID" value="BAE24095.1"/>
    <property type="molecule type" value="mRNA"/>
</dbReference>
<dbReference type="EMBL" id="AC125101">
    <property type="status" value="NOT_ANNOTATED_CDS"/>
    <property type="molecule type" value="Genomic_DNA"/>
</dbReference>
<dbReference type="EMBL" id="BC027553">
    <property type="protein sequence ID" value="AAH27553.1"/>
    <property type="status" value="ALT_SEQ"/>
    <property type="molecule type" value="mRNA"/>
</dbReference>
<dbReference type="EMBL" id="BC037640">
    <property type="protein sequence ID" value="AAH37640.1"/>
    <property type="molecule type" value="mRNA"/>
</dbReference>
<dbReference type="CCDS" id="CCDS37995.1">
    <molecule id="Q8CI33-1"/>
</dbReference>
<dbReference type="RefSeq" id="NP_001074546.1">
    <molecule id="Q8CI33-1"/>
    <property type="nucleotide sequence ID" value="NM_001081077.1"/>
</dbReference>
<dbReference type="RefSeq" id="NP_001343507.1">
    <molecule id="Q8CI33-2"/>
    <property type="nucleotide sequence ID" value="NM_001356578.1"/>
</dbReference>
<dbReference type="RefSeq" id="XP_006527427.1">
    <molecule id="Q8CI33-2"/>
    <property type="nucleotide sequence ID" value="XM_006527364.3"/>
</dbReference>
<dbReference type="RefSeq" id="XP_006527428.1">
    <property type="nucleotide sequence ID" value="XM_006527365.2"/>
</dbReference>
<dbReference type="RefSeq" id="XP_011245659.1">
    <molecule id="Q8CI33-2"/>
    <property type="nucleotide sequence ID" value="XM_011247357.2"/>
</dbReference>
<dbReference type="RefSeq" id="XP_011245660.1">
    <molecule id="Q8CI33-2"/>
    <property type="nucleotide sequence ID" value="XM_011247358.3"/>
</dbReference>
<dbReference type="RefSeq" id="XP_017173785.1">
    <molecule id="Q8CI33-2"/>
    <property type="nucleotide sequence ID" value="XM_017318296.2"/>
</dbReference>
<dbReference type="RefSeq" id="XP_017173786.1">
    <molecule id="Q8CI33-2"/>
    <property type="nucleotide sequence ID" value="XM_017318297.2"/>
</dbReference>
<dbReference type="RefSeq" id="XP_030106943.1">
    <molecule id="Q8CI33-2"/>
    <property type="nucleotide sequence ID" value="XM_030251083.2"/>
</dbReference>
<dbReference type="RefSeq" id="XP_036017588.1">
    <molecule id="Q8CI33-2"/>
    <property type="nucleotide sequence ID" value="XM_036161695.1"/>
</dbReference>
<dbReference type="SMR" id="Q8CI33"/>
<dbReference type="BioGRID" id="215403">
    <property type="interactions" value="1"/>
</dbReference>
<dbReference type="FunCoup" id="Q8CI33">
    <property type="interactions" value="2837"/>
</dbReference>
<dbReference type="STRING" id="10090.ENSMUSP00000026218"/>
<dbReference type="iPTMnet" id="Q8CI33"/>
<dbReference type="PhosphoSitePlus" id="Q8CI33"/>
<dbReference type="SwissPalm" id="Q8CI33"/>
<dbReference type="PaxDb" id="10090-ENSMUSP00000026218"/>
<dbReference type="PeptideAtlas" id="Q8CI33"/>
<dbReference type="ProteomicsDB" id="265395">
    <molecule id="Q8CI33-1"/>
</dbReference>
<dbReference type="ProteomicsDB" id="265396">
    <molecule id="Q8CI33-2"/>
</dbReference>
<dbReference type="Pumba" id="Q8CI33"/>
<dbReference type="Antibodypedia" id="49159">
    <property type="antibodies" value="101 antibodies from 16 providers"/>
</dbReference>
<dbReference type="Ensembl" id="ENSMUST00000026218.7">
    <molecule id="Q8CI33-1"/>
    <property type="protein sequence ID" value="ENSMUSP00000026218.6"/>
    <property type="gene ID" value="ENSMUSG00000025200.8"/>
</dbReference>
<dbReference type="GeneID" id="72502"/>
<dbReference type="KEGG" id="mmu:72502"/>
<dbReference type="UCSC" id="uc008hpj.1">
    <molecule id="Q8CI33-1"/>
    <property type="organism name" value="mouse"/>
</dbReference>
<dbReference type="AGR" id="MGI:1919752"/>
<dbReference type="CTD" id="55280"/>
<dbReference type="MGI" id="MGI:1919752">
    <property type="gene designation" value="Cwf19l1"/>
</dbReference>
<dbReference type="VEuPathDB" id="HostDB:ENSMUSG00000025200"/>
<dbReference type="eggNOG" id="KOG2476">
    <property type="taxonomic scope" value="Eukaryota"/>
</dbReference>
<dbReference type="GeneTree" id="ENSGT00940000156000"/>
<dbReference type="HOGENOM" id="CLU_019955_2_0_1"/>
<dbReference type="InParanoid" id="Q8CI33"/>
<dbReference type="OMA" id="IVPITHY"/>
<dbReference type="OrthoDB" id="444325at2759"/>
<dbReference type="PhylomeDB" id="Q8CI33"/>
<dbReference type="TreeFam" id="TF105790"/>
<dbReference type="BioGRID-ORCS" id="72502">
    <property type="hits" value="10 hits in 78 CRISPR screens"/>
</dbReference>
<dbReference type="ChiTaRS" id="Cwf19l1">
    <property type="organism name" value="mouse"/>
</dbReference>
<dbReference type="PRO" id="PR:Q8CI33"/>
<dbReference type="Proteomes" id="UP000000589">
    <property type="component" value="Chromosome 19"/>
</dbReference>
<dbReference type="RNAct" id="Q8CI33">
    <property type="molecule type" value="protein"/>
</dbReference>
<dbReference type="Bgee" id="ENSMUSG00000025200">
    <property type="expression patterns" value="Expressed in undifferentiated genital tubercle and 246 other cell types or tissues"/>
</dbReference>
<dbReference type="ExpressionAtlas" id="Q8CI33">
    <property type="expression patterns" value="baseline and differential"/>
</dbReference>
<dbReference type="CDD" id="cd07380">
    <property type="entry name" value="MPP_CWF19_N"/>
    <property type="match status" value="1"/>
</dbReference>
<dbReference type="FunFam" id="3.30.428.10:FF:000024">
    <property type="entry name" value="CWF19-like cell cycle control factor 1"/>
    <property type="match status" value="1"/>
</dbReference>
<dbReference type="InterPro" id="IPR040194">
    <property type="entry name" value="Cwf19-like"/>
</dbReference>
<dbReference type="InterPro" id="IPR006768">
    <property type="entry name" value="Cwf19-like_C_dom-1"/>
</dbReference>
<dbReference type="InterPro" id="IPR006767">
    <property type="entry name" value="Cwf19-like_C_dom-2"/>
</dbReference>
<dbReference type="InterPro" id="IPR036265">
    <property type="entry name" value="HIT-like_sf"/>
</dbReference>
<dbReference type="PANTHER" id="PTHR12072">
    <property type="entry name" value="CWF19, CELL CYCLE CONTROL PROTEIN"/>
    <property type="match status" value="1"/>
</dbReference>
<dbReference type="PANTHER" id="PTHR12072:SF4">
    <property type="entry name" value="CWF19-LIKE PROTEIN 1"/>
    <property type="match status" value="1"/>
</dbReference>
<dbReference type="Pfam" id="PF04677">
    <property type="entry name" value="CwfJ_C_1"/>
    <property type="match status" value="1"/>
</dbReference>
<dbReference type="Pfam" id="PF04676">
    <property type="entry name" value="CwfJ_C_2"/>
    <property type="match status" value="1"/>
</dbReference>
<dbReference type="SUPFAM" id="SSF54197">
    <property type="entry name" value="HIT-like"/>
    <property type="match status" value="1"/>
</dbReference>